<protein>
    <recommendedName>
        <fullName evidence="1">Formate-dependent phosphoribosylglycinamide formyltransferase</fullName>
        <ecNumber evidence="1">6.3.1.21</ecNumber>
    </recommendedName>
    <alternativeName>
        <fullName evidence="1">5'-phosphoribosylglycinamide transformylase 2</fullName>
    </alternativeName>
    <alternativeName>
        <fullName evidence="1">Formate-dependent GAR transformylase</fullName>
    </alternativeName>
    <alternativeName>
        <fullName evidence="1">GAR transformylase 2</fullName>
        <shortName evidence="1">GART 2</shortName>
    </alternativeName>
    <alternativeName>
        <fullName evidence="1">Non-folate glycinamide ribonucleotide transformylase</fullName>
    </alternativeName>
    <alternativeName>
        <fullName evidence="1">Phosphoribosylglycinamide formyltransferase 2</fullName>
    </alternativeName>
</protein>
<proteinExistence type="inferred from homology"/>
<evidence type="ECO:0000255" key="1">
    <source>
        <dbReference type="HAMAP-Rule" id="MF_01643"/>
    </source>
</evidence>
<organism>
    <name type="scientific">Escherichia coli (strain K12 / DH10B)</name>
    <dbReference type="NCBI Taxonomy" id="316385"/>
    <lineage>
        <taxon>Bacteria</taxon>
        <taxon>Pseudomonadati</taxon>
        <taxon>Pseudomonadota</taxon>
        <taxon>Gammaproteobacteria</taxon>
        <taxon>Enterobacterales</taxon>
        <taxon>Enterobacteriaceae</taxon>
        <taxon>Escherichia</taxon>
    </lineage>
</organism>
<sequence length="392" mass="42434">MTLLGTALRPAATRVMLLGSGELGKEVAIECQRLGVEVIAVDRYADAPAMHVAHRSHVINMLDGDALRRVVELEKPHYIVPEIEAIATDMLIQLEEEGLNVVPCARATKLTMNREGIRRLAAEELQLPTSTYRFADSESLFREAVADIGYPCIVKPVMSSSGKGQTFIRSAEQLAQAWKYAQQGGRAGAGRVIVEGVVKFDFEITLLTVSAVDGVHFCAPVGHRQEDGDYRESWQPQQMSPLALERAQEIARKVVLALGGYGLFGVELFVCGDEVIFSEVSPRPHDTGMVTLISQDLSEFALHVRAFLGLPVGGIRQYGPAASAVILPQLTSQNVTFDNVQNAVGADLQIRLFGKPEIDGSRRLGVALATAESVVDAIERAKHAAGQVKVQG</sequence>
<feature type="chain" id="PRO_1000186880" description="Formate-dependent phosphoribosylglycinamide formyltransferase">
    <location>
        <begin position="1"/>
        <end position="392"/>
    </location>
</feature>
<feature type="domain" description="ATP-grasp" evidence="1">
    <location>
        <begin position="119"/>
        <end position="308"/>
    </location>
</feature>
<feature type="binding site" evidence="1">
    <location>
        <begin position="22"/>
        <end position="23"/>
    </location>
    <ligand>
        <name>N(1)-(5-phospho-beta-D-ribosyl)glycinamide</name>
        <dbReference type="ChEBI" id="CHEBI:143788"/>
    </ligand>
</feature>
<feature type="binding site" evidence="1">
    <location>
        <position position="82"/>
    </location>
    <ligand>
        <name>N(1)-(5-phospho-beta-D-ribosyl)glycinamide</name>
        <dbReference type="ChEBI" id="CHEBI:143788"/>
    </ligand>
</feature>
<feature type="binding site" evidence="1">
    <location>
        <position position="114"/>
    </location>
    <ligand>
        <name>ATP</name>
        <dbReference type="ChEBI" id="CHEBI:30616"/>
    </ligand>
</feature>
<feature type="binding site" evidence="1">
    <location>
        <position position="155"/>
    </location>
    <ligand>
        <name>ATP</name>
        <dbReference type="ChEBI" id="CHEBI:30616"/>
    </ligand>
</feature>
<feature type="binding site" evidence="1">
    <location>
        <begin position="160"/>
        <end position="165"/>
    </location>
    <ligand>
        <name>ATP</name>
        <dbReference type="ChEBI" id="CHEBI:30616"/>
    </ligand>
</feature>
<feature type="binding site" evidence="1">
    <location>
        <begin position="195"/>
        <end position="198"/>
    </location>
    <ligand>
        <name>ATP</name>
        <dbReference type="ChEBI" id="CHEBI:30616"/>
    </ligand>
</feature>
<feature type="binding site" evidence="1">
    <location>
        <position position="203"/>
    </location>
    <ligand>
        <name>ATP</name>
        <dbReference type="ChEBI" id="CHEBI:30616"/>
    </ligand>
</feature>
<feature type="binding site" evidence="1">
    <location>
        <position position="267"/>
    </location>
    <ligand>
        <name>Mg(2+)</name>
        <dbReference type="ChEBI" id="CHEBI:18420"/>
    </ligand>
</feature>
<feature type="binding site" evidence="1">
    <location>
        <position position="279"/>
    </location>
    <ligand>
        <name>Mg(2+)</name>
        <dbReference type="ChEBI" id="CHEBI:18420"/>
    </ligand>
</feature>
<feature type="binding site" evidence="1">
    <location>
        <position position="286"/>
    </location>
    <ligand>
        <name>N(1)-(5-phospho-beta-D-ribosyl)glycinamide</name>
        <dbReference type="ChEBI" id="CHEBI:143788"/>
    </ligand>
</feature>
<feature type="binding site" evidence="1">
    <location>
        <position position="355"/>
    </location>
    <ligand>
        <name>N(1)-(5-phospho-beta-D-ribosyl)glycinamide</name>
        <dbReference type="ChEBI" id="CHEBI:143788"/>
    </ligand>
</feature>
<feature type="binding site" evidence="1">
    <location>
        <begin position="362"/>
        <end position="363"/>
    </location>
    <ligand>
        <name>N(1)-(5-phospho-beta-D-ribosyl)glycinamide</name>
        <dbReference type="ChEBI" id="CHEBI:143788"/>
    </ligand>
</feature>
<reference key="1">
    <citation type="journal article" date="2008" name="J. Bacteriol.">
        <title>The complete genome sequence of Escherichia coli DH10B: insights into the biology of a laboratory workhorse.</title>
        <authorList>
            <person name="Durfee T."/>
            <person name="Nelson R."/>
            <person name="Baldwin S."/>
            <person name="Plunkett G. III"/>
            <person name="Burland V."/>
            <person name="Mau B."/>
            <person name="Petrosino J.F."/>
            <person name="Qin X."/>
            <person name="Muzny D.M."/>
            <person name="Ayele M."/>
            <person name="Gibbs R.A."/>
            <person name="Csorgo B."/>
            <person name="Posfai G."/>
            <person name="Weinstock G.M."/>
            <person name="Blattner F.R."/>
        </authorList>
    </citation>
    <scope>NUCLEOTIDE SEQUENCE [LARGE SCALE GENOMIC DNA]</scope>
    <source>
        <strain>K12 / DH10B</strain>
    </source>
</reference>
<keyword id="KW-0067">ATP-binding</keyword>
<keyword id="KW-0436">Ligase</keyword>
<keyword id="KW-0460">Magnesium</keyword>
<keyword id="KW-0479">Metal-binding</keyword>
<keyword id="KW-0547">Nucleotide-binding</keyword>
<keyword id="KW-0658">Purine biosynthesis</keyword>
<gene>
    <name evidence="1" type="primary">purT</name>
    <name type="ordered locus">ECDH10B_1990</name>
</gene>
<name>PURT_ECODH</name>
<comment type="function">
    <text evidence="1">Involved in the de novo purine biosynthesis. Catalyzes the transfer of formate to 5-phospho-ribosyl-glycinamide (GAR), producing 5-phospho-ribosyl-N-formylglycinamide (FGAR). Formate is provided by PurU via hydrolysis of 10-formyl-tetrahydrofolate.</text>
</comment>
<comment type="catalytic activity">
    <reaction evidence="1">
        <text>N(1)-(5-phospho-beta-D-ribosyl)glycinamide + formate + ATP = N(2)-formyl-N(1)-(5-phospho-beta-D-ribosyl)glycinamide + ADP + phosphate + H(+)</text>
        <dbReference type="Rhea" id="RHEA:24829"/>
        <dbReference type="ChEBI" id="CHEBI:15378"/>
        <dbReference type="ChEBI" id="CHEBI:15740"/>
        <dbReference type="ChEBI" id="CHEBI:30616"/>
        <dbReference type="ChEBI" id="CHEBI:43474"/>
        <dbReference type="ChEBI" id="CHEBI:143788"/>
        <dbReference type="ChEBI" id="CHEBI:147286"/>
        <dbReference type="ChEBI" id="CHEBI:456216"/>
        <dbReference type="EC" id="6.3.1.21"/>
    </reaction>
    <physiologicalReaction direction="left-to-right" evidence="1">
        <dbReference type="Rhea" id="RHEA:24830"/>
    </physiologicalReaction>
</comment>
<comment type="pathway">
    <text evidence="1">Purine metabolism; IMP biosynthesis via de novo pathway; N(2)-formyl-N(1)-(5-phospho-D-ribosyl)glycinamide from N(1)-(5-phospho-D-ribosyl)glycinamide (formate route): step 1/1.</text>
</comment>
<comment type="subunit">
    <text evidence="1">Homodimer.</text>
</comment>
<comment type="similarity">
    <text evidence="1">Belongs to the PurK/PurT family.</text>
</comment>
<dbReference type="EC" id="6.3.1.21" evidence="1"/>
<dbReference type="EMBL" id="CP000948">
    <property type="protein sequence ID" value="ACB03047.1"/>
    <property type="molecule type" value="Genomic_DNA"/>
</dbReference>
<dbReference type="RefSeq" id="WP_000173484.1">
    <property type="nucleotide sequence ID" value="NC_010473.1"/>
</dbReference>
<dbReference type="SMR" id="B1XHB7"/>
<dbReference type="GeneID" id="93776116"/>
<dbReference type="KEGG" id="ecd:ECDH10B_1990"/>
<dbReference type="HOGENOM" id="CLU_011534_1_3_6"/>
<dbReference type="UniPathway" id="UPA00074">
    <property type="reaction ID" value="UER00127"/>
</dbReference>
<dbReference type="GO" id="GO:0005829">
    <property type="term" value="C:cytosol"/>
    <property type="evidence" value="ECO:0007669"/>
    <property type="project" value="TreeGrafter"/>
</dbReference>
<dbReference type="GO" id="GO:0005524">
    <property type="term" value="F:ATP binding"/>
    <property type="evidence" value="ECO:0007669"/>
    <property type="project" value="UniProtKB-UniRule"/>
</dbReference>
<dbReference type="GO" id="GO:0000287">
    <property type="term" value="F:magnesium ion binding"/>
    <property type="evidence" value="ECO:0007669"/>
    <property type="project" value="InterPro"/>
</dbReference>
<dbReference type="GO" id="GO:0043815">
    <property type="term" value="F:phosphoribosylglycinamide formyltransferase 2 activity"/>
    <property type="evidence" value="ECO:0007669"/>
    <property type="project" value="UniProtKB-UniRule"/>
</dbReference>
<dbReference type="GO" id="GO:0004644">
    <property type="term" value="F:phosphoribosylglycinamide formyltransferase activity"/>
    <property type="evidence" value="ECO:0007669"/>
    <property type="project" value="InterPro"/>
</dbReference>
<dbReference type="GO" id="GO:0006189">
    <property type="term" value="P:'de novo' IMP biosynthetic process"/>
    <property type="evidence" value="ECO:0007669"/>
    <property type="project" value="UniProtKB-UniRule"/>
</dbReference>
<dbReference type="FunFam" id="3.30.1490.20:FF:000013">
    <property type="entry name" value="Formate-dependent phosphoribosylglycinamide formyltransferase"/>
    <property type="match status" value="1"/>
</dbReference>
<dbReference type="FunFam" id="3.30.470.20:FF:000027">
    <property type="entry name" value="Formate-dependent phosphoribosylglycinamide formyltransferase"/>
    <property type="match status" value="1"/>
</dbReference>
<dbReference type="FunFam" id="3.40.50.20:FF:000007">
    <property type="entry name" value="Formate-dependent phosphoribosylglycinamide formyltransferase"/>
    <property type="match status" value="1"/>
</dbReference>
<dbReference type="Gene3D" id="3.40.50.20">
    <property type="match status" value="1"/>
</dbReference>
<dbReference type="Gene3D" id="3.30.1490.20">
    <property type="entry name" value="ATP-grasp fold, A domain"/>
    <property type="match status" value="1"/>
</dbReference>
<dbReference type="Gene3D" id="3.30.470.20">
    <property type="entry name" value="ATP-grasp fold, B domain"/>
    <property type="match status" value="1"/>
</dbReference>
<dbReference type="HAMAP" id="MF_01643">
    <property type="entry name" value="PurT"/>
    <property type="match status" value="1"/>
</dbReference>
<dbReference type="InterPro" id="IPR011761">
    <property type="entry name" value="ATP-grasp"/>
</dbReference>
<dbReference type="InterPro" id="IPR003135">
    <property type="entry name" value="ATP-grasp_carboxylate-amine"/>
</dbReference>
<dbReference type="InterPro" id="IPR013815">
    <property type="entry name" value="ATP_grasp_subdomain_1"/>
</dbReference>
<dbReference type="InterPro" id="IPR016185">
    <property type="entry name" value="PreATP-grasp_dom_sf"/>
</dbReference>
<dbReference type="InterPro" id="IPR005862">
    <property type="entry name" value="PurT"/>
</dbReference>
<dbReference type="InterPro" id="IPR054350">
    <property type="entry name" value="PurT/PurK_preATP-grasp"/>
</dbReference>
<dbReference type="InterPro" id="IPR048740">
    <property type="entry name" value="PurT_C"/>
</dbReference>
<dbReference type="InterPro" id="IPR011054">
    <property type="entry name" value="Rudment_hybrid_motif"/>
</dbReference>
<dbReference type="NCBIfam" id="NF006766">
    <property type="entry name" value="PRK09288.1"/>
    <property type="match status" value="1"/>
</dbReference>
<dbReference type="NCBIfam" id="TIGR01142">
    <property type="entry name" value="purT"/>
    <property type="match status" value="1"/>
</dbReference>
<dbReference type="PANTHER" id="PTHR43055">
    <property type="entry name" value="FORMATE-DEPENDENT PHOSPHORIBOSYLGLYCINAMIDE FORMYLTRANSFERASE"/>
    <property type="match status" value="1"/>
</dbReference>
<dbReference type="PANTHER" id="PTHR43055:SF1">
    <property type="entry name" value="FORMATE-DEPENDENT PHOSPHORIBOSYLGLYCINAMIDE FORMYLTRANSFERASE"/>
    <property type="match status" value="1"/>
</dbReference>
<dbReference type="Pfam" id="PF02222">
    <property type="entry name" value="ATP-grasp"/>
    <property type="match status" value="1"/>
</dbReference>
<dbReference type="Pfam" id="PF21244">
    <property type="entry name" value="PurT_C"/>
    <property type="match status" value="1"/>
</dbReference>
<dbReference type="Pfam" id="PF22660">
    <property type="entry name" value="RS_preATP-grasp-like"/>
    <property type="match status" value="1"/>
</dbReference>
<dbReference type="SUPFAM" id="SSF56059">
    <property type="entry name" value="Glutathione synthetase ATP-binding domain-like"/>
    <property type="match status" value="1"/>
</dbReference>
<dbReference type="SUPFAM" id="SSF52440">
    <property type="entry name" value="PreATP-grasp domain"/>
    <property type="match status" value="1"/>
</dbReference>
<dbReference type="SUPFAM" id="SSF51246">
    <property type="entry name" value="Rudiment single hybrid motif"/>
    <property type="match status" value="1"/>
</dbReference>
<dbReference type="PROSITE" id="PS50975">
    <property type="entry name" value="ATP_GRASP"/>
    <property type="match status" value="1"/>
</dbReference>
<accession>B1XHB7</accession>